<sequence>MTHSRTALVLIHPATTTRPELLTAAKQHSSLSGANIEQHLVNKLNDGSLQLQDNSYDVIFYVTPEAADEILFPRRLIGVLAAALRAGGSLHGLYDKYQVDALLSGFDIVREPTYHWQKRAVTASAPVKLAPRQPVSAAGLPRFKRASAPSPAAVTPTLDEVPPAAVDPVKAALLDSAAGDAPIAENDLVVGHDSTPITLLTCGRTQTRRRKACKDCTCGLREENEKEISDTHARQEKLLLGDAVKFSEPELAEIDFTIEGKKVGGCGSCSLGDAFRCSGCPYLGLPAFKPGQPINLSAISDDL</sequence>
<gene>
    <name evidence="1" type="primary">DRE2</name>
    <name type="ordered locus">AAR141W</name>
</gene>
<feature type="chain" id="PRO_0000324855" description="Fe-S cluster assembly protein DRE2">
    <location>
        <begin position="1"/>
        <end position="303"/>
    </location>
</feature>
<feature type="region of interest" description="N-terminal SAM-like domain" evidence="1">
    <location>
        <begin position="1"/>
        <end position="125"/>
    </location>
</feature>
<feature type="region of interest" description="Linker" evidence="1">
    <location>
        <begin position="126"/>
        <end position="188"/>
    </location>
</feature>
<feature type="region of interest" description="Fe-S binding site A" evidence="1">
    <location>
        <begin position="202"/>
        <end position="218"/>
    </location>
</feature>
<feature type="region of interest" description="Fe-S binding site B" evidence="1">
    <location>
        <begin position="266"/>
        <end position="280"/>
    </location>
</feature>
<feature type="short sequence motif" description="Cx2C motif 1" evidence="1">
    <location>
        <begin position="266"/>
        <end position="269"/>
    </location>
</feature>
<feature type="short sequence motif" description="Cx2C motif 2" evidence="1">
    <location>
        <begin position="277"/>
        <end position="280"/>
    </location>
</feature>
<feature type="binding site" evidence="1">
    <location>
        <position position="202"/>
    </location>
    <ligand>
        <name>[2Fe-2S] cluster</name>
        <dbReference type="ChEBI" id="CHEBI:190135"/>
    </ligand>
</feature>
<feature type="binding site" evidence="1">
    <location>
        <position position="213"/>
    </location>
    <ligand>
        <name>[2Fe-2S] cluster</name>
        <dbReference type="ChEBI" id="CHEBI:190135"/>
    </ligand>
</feature>
<feature type="binding site" evidence="1">
    <location>
        <position position="216"/>
    </location>
    <ligand>
        <name>[2Fe-2S] cluster</name>
        <dbReference type="ChEBI" id="CHEBI:190135"/>
    </ligand>
</feature>
<feature type="binding site" evidence="1">
    <location>
        <position position="218"/>
    </location>
    <ligand>
        <name>[2Fe-2S] cluster</name>
        <dbReference type="ChEBI" id="CHEBI:190135"/>
    </ligand>
</feature>
<feature type="binding site" evidence="1">
    <location>
        <position position="266"/>
    </location>
    <ligand>
        <name>[4Fe-4S] cluster</name>
        <dbReference type="ChEBI" id="CHEBI:49883"/>
    </ligand>
</feature>
<feature type="binding site" evidence="1">
    <location>
        <position position="269"/>
    </location>
    <ligand>
        <name>[4Fe-4S] cluster</name>
        <dbReference type="ChEBI" id="CHEBI:49883"/>
    </ligand>
</feature>
<feature type="binding site" evidence="1">
    <location>
        <position position="277"/>
    </location>
    <ligand>
        <name>[4Fe-4S] cluster</name>
        <dbReference type="ChEBI" id="CHEBI:49883"/>
    </ligand>
</feature>
<feature type="binding site" evidence="1">
    <location>
        <position position="280"/>
    </location>
    <ligand>
        <name>[4Fe-4S] cluster</name>
        <dbReference type="ChEBI" id="CHEBI:49883"/>
    </ligand>
</feature>
<reference key="1">
    <citation type="journal article" date="2004" name="Science">
        <title>The Ashbya gossypii genome as a tool for mapping the ancient Saccharomyces cerevisiae genome.</title>
        <authorList>
            <person name="Dietrich F.S."/>
            <person name="Voegeli S."/>
            <person name="Brachat S."/>
            <person name="Lerch A."/>
            <person name="Gates K."/>
            <person name="Steiner S."/>
            <person name="Mohr C."/>
            <person name="Poehlmann R."/>
            <person name="Luedi P."/>
            <person name="Choi S."/>
            <person name="Wing R.A."/>
            <person name="Flavier A."/>
            <person name="Gaffney T.D."/>
            <person name="Philippsen P."/>
        </authorList>
    </citation>
    <scope>NUCLEOTIDE SEQUENCE [LARGE SCALE GENOMIC DNA]</scope>
    <source>
        <strain>ATCC 10895 / CBS 109.51 / FGSC 9923 / NRRL Y-1056</strain>
    </source>
</reference>
<reference key="2">
    <citation type="journal article" date="2013" name="G3 (Bethesda)">
        <title>Genomes of Ashbya fungi isolated from insects reveal four mating-type loci, numerous translocations, lack of transposons, and distinct gene duplications.</title>
        <authorList>
            <person name="Dietrich F.S."/>
            <person name="Voegeli S."/>
            <person name="Kuo S."/>
            <person name="Philippsen P."/>
        </authorList>
    </citation>
    <scope>GENOME REANNOTATION</scope>
    <source>
        <strain>ATCC 10895 / CBS 109.51 / FGSC 9923 / NRRL Y-1056</strain>
    </source>
</reference>
<keyword id="KW-0001">2Fe-2S</keyword>
<keyword id="KW-0004">4Fe-4S</keyword>
<keyword id="KW-0963">Cytoplasm</keyword>
<keyword id="KW-0408">Iron</keyword>
<keyword id="KW-0411">Iron-sulfur</keyword>
<keyword id="KW-0479">Metal-binding</keyword>
<keyword id="KW-0496">Mitochondrion</keyword>
<keyword id="KW-1185">Reference proteome</keyword>
<accession>Q75EE0</accession>
<evidence type="ECO:0000255" key="1">
    <source>
        <dbReference type="HAMAP-Rule" id="MF_03115"/>
    </source>
</evidence>
<proteinExistence type="inferred from homology"/>
<organism>
    <name type="scientific">Eremothecium gossypii (strain ATCC 10895 / CBS 109.51 / FGSC 9923 / NRRL Y-1056)</name>
    <name type="common">Yeast</name>
    <name type="synonym">Ashbya gossypii</name>
    <dbReference type="NCBI Taxonomy" id="284811"/>
    <lineage>
        <taxon>Eukaryota</taxon>
        <taxon>Fungi</taxon>
        <taxon>Dikarya</taxon>
        <taxon>Ascomycota</taxon>
        <taxon>Saccharomycotina</taxon>
        <taxon>Saccharomycetes</taxon>
        <taxon>Saccharomycetales</taxon>
        <taxon>Saccharomycetaceae</taxon>
        <taxon>Eremothecium</taxon>
    </lineage>
</organism>
<comment type="function">
    <text evidence="1">Component of the cytosolic iron-sulfur (Fe-S) protein assembly (CIA) machinery required for the maturation of extramitochondrial Fe-S proteins. Part of an electron transfer chain functioning in an early step of cytosolic Fe-S biogenesis, facilitating the de novo assembly of a [4Fe-4S] cluster on the scaffold complex CFD1-NBP35. Electrons are transferred to DRE2 from NADPH via the FAD- and FMN-containing protein TAH18. TAH18-DRE2 are also required for the assembly of the diferric tyrosyl radical cofactor of ribonucleotide reductase (RNR), probably by providing electrons for reduction during radical cofactor maturation in the catalytic small subunit RNR2.</text>
</comment>
<comment type="cofactor">
    <cofactor evidence="1">
        <name>[2Fe-2S] cluster</name>
        <dbReference type="ChEBI" id="CHEBI:190135"/>
    </cofactor>
</comment>
<comment type="cofactor">
    <cofactor evidence="1">
        <name>[4Fe-4S] cluster</name>
        <dbReference type="ChEBI" id="CHEBI:49883"/>
    </cofactor>
</comment>
<comment type="subunit">
    <text evidence="1">Monomer. Interacts with TAH18. Interacts with MIA40.</text>
</comment>
<comment type="subcellular location">
    <subcellularLocation>
        <location evidence="1">Cytoplasm</location>
    </subcellularLocation>
    <subcellularLocation>
        <location evidence="1">Mitochondrion intermembrane space</location>
    </subcellularLocation>
</comment>
<comment type="domain">
    <text evidence="1">The C-terminal domain binds 2 Fe-S clusters but is otherwise mostly in an intrinsically disordered conformation.</text>
</comment>
<comment type="domain">
    <text evidence="1">The N-terminal domain has structural similarity with S-adenosyl-L-methionine-dependent methyltransferases, but does not bind S-adenosyl-L-methionine. It is required for correct assembly of the 2 Fe-S clusters.</text>
</comment>
<comment type="domain">
    <text evidence="1">The twin Cx2C motifs are involved in the recognition by the mitochondrial MIA40-ERV1 disulfide relay system. The formation of 2 disulfide bonds in the Cx2C motifs through dithiol/disulfide exchange reactions effectively traps the protein in the mitochondrial intermembrane space.</text>
</comment>
<comment type="similarity">
    <text evidence="1">Belongs to the anamorsin family.</text>
</comment>
<protein>
    <recommendedName>
        <fullName evidence="1">Fe-S cluster assembly protein DRE2</fullName>
    </recommendedName>
    <alternativeName>
        <fullName evidence="1">Anamorsin homolog</fullName>
    </alternativeName>
</protein>
<dbReference type="EMBL" id="AE016814">
    <property type="protein sequence ID" value="AAS50507.1"/>
    <property type="molecule type" value="Genomic_DNA"/>
</dbReference>
<dbReference type="RefSeq" id="NP_982683.1">
    <property type="nucleotide sequence ID" value="NM_208036.1"/>
</dbReference>
<dbReference type="SMR" id="Q75EE0"/>
<dbReference type="FunCoup" id="Q75EE0">
    <property type="interactions" value="181"/>
</dbReference>
<dbReference type="STRING" id="284811.Q75EE0"/>
<dbReference type="EnsemblFungi" id="AAS50507">
    <property type="protein sequence ID" value="AAS50507"/>
    <property type="gene ID" value="AGOS_AAR141W"/>
</dbReference>
<dbReference type="GeneID" id="4618404"/>
<dbReference type="KEGG" id="ago:AGOS_AAR141W"/>
<dbReference type="eggNOG" id="KOG4020">
    <property type="taxonomic scope" value="Eukaryota"/>
</dbReference>
<dbReference type="HOGENOM" id="CLU_067152_0_0_1"/>
<dbReference type="InParanoid" id="Q75EE0"/>
<dbReference type="OMA" id="TMITCGK"/>
<dbReference type="OrthoDB" id="311633at2759"/>
<dbReference type="Proteomes" id="UP000000591">
    <property type="component" value="Chromosome I"/>
</dbReference>
<dbReference type="GO" id="GO:0005737">
    <property type="term" value="C:cytoplasm"/>
    <property type="evidence" value="ECO:0000318"/>
    <property type="project" value="GO_Central"/>
</dbReference>
<dbReference type="GO" id="GO:0097361">
    <property type="term" value="C:cytosolic [4Fe-4S] assembly targeting complex"/>
    <property type="evidence" value="ECO:0007669"/>
    <property type="project" value="EnsemblFungi"/>
</dbReference>
<dbReference type="GO" id="GO:0005758">
    <property type="term" value="C:mitochondrial intermembrane space"/>
    <property type="evidence" value="ECO:0007669"/>
    <property type="project" value="UniProtKB-SubCell"/>
</dbReference>
<dbReference type="GO" id="GO:0051537">
    <property type="term" value="F:2 iron, 2 sulfur cluster binding"/>
    <property type="evidence" value="ECO:0007669"/>
    <property type="project" value="UniProtKB-UniRule"/>
</dbReference>
<dbReference type="GO" id="GO:0051539">
    <property type="term" value="F:4 iron, 4 sulfur cluster binding"/>
    <property type="evidence" value="ECO:0007669"/>
    <property type="project" value="UniProtKB-KW"/>
</dbReference>
<dbReference type="GO" id="GO:0009055">
    <property type="term" value="F:electron transfer activity"/>
    <property type="evidence" value="ECO:0007669"/>
    <property type="project" value="UniProtKB-UniRule"/>
</dbReference>
<dbReference type="GO" id="GO:0046872">
    <property type="term" value="F:metal ion binding"/>
    <property type="evidence" value="ECO:0007669"/>
    <property type="project" value="UniProtKB-KW"/>
</dbReference>
<dbReference type="GO" id="GO:0034599">
    <property type="term" value="P:cellular response to oxidative stress"/>
    <property type="evidence" value="ECO:0007669"/>
    <property type="project" value="EnsemblFungi"/>
</dbReference>
<dbReference type="GO" id="GO:0016226">
    <property type="term" value="P:iron-sulfur cluster assembly"/>
    <property type="evidence" value="ECO:0000318"/>
    <property type="project" value="GO_Central"/>
</dbReference>
<dbReference type="GO" id="GO:1901299">
    <property type="term" value="P:negative regulation of hydrogen peroxide-mediated programmed cell death"/>
    <property type="evidence" value="ECO:0007669"/>
    <property type="project" value="EnsemblFungi"/>
</dbReference>
<dbReference type="GO" id="GO:0045019">
    <property type="term" value="P:negative regulation of nitric oxide biosynthetic process"/>
    <property type="evidence" value="ECO:0007669"/>
    <property type="project" value="EnsemblFungi"/>
</dbReference>
<dbReference type="Gene3D" id="3.40.50.11000">
    <property type="entry name" value="Fe-S cluster assembly protein Dre2, N-terminal domain"/>
    <property type="match status" value="1"/>
</dbReference>
<dbReference type="HAMAP" id="MF_03115">
    <property type="entry name" value="Anamorsin"/>
    <property type="match status" value="1"/>
</dbReference>
<dbReference type="InterPro" id="IPR007785">
    <property type="entry name" value="Anamorsin"/>
</dbReference>
<dbReference type="InterPro" id="IPR046408">
    <property type="entry name" value="CIAPIN1"/>
</dbReference>
<dbReference type="InterPro" id="IPR031838">
    <property type="entry name" value="Dre2_N"/>
</dbReference>
<dbReference type="PANTHER" id="PTHR13273">
    <property type="entry name" value="ANAMORSIN"/>
    <property type="match status" value="1"/>
</dbReference>
<dbReference type="PANTHER" id="PTHR13273:SF14">
    <property type="entry name" value="ANAMORSIN"/>
    <property type="match status" value="1"/>
</dbReference>
<dbReference type="Pfam" id="PF05093">
    <property type="entry name" value="CIAPIN1"/>
    <property type="match status" value="1"/>
</dbReference>
<dbReference type="Pfam" id="PF16803">
    <property type="entry name" value="DRE2_N"/>
    <property type="match status" value="1"/>
</dbReference>
<name>DRE2_EREGS</name>